<comment type="similarity">
    <text evidence="1">Belongs to the UPF0102 family.</text>
</comment>
<comment type="sequence caution" evidence="3">
    <conflict type="erroneous initiation">
        <sequence resource="EMBL-CDS" id="ABK07044"/>
    </conflict>
</comment>
<evidence type="ECO:0000255" key="1">
    <source>
        <dbReference type="HAMAP-Rule" id="MF_00048"/>
    </source>
</evidence>
<evidence type="ECO:0000256" key="2">
    <source>
        <dbReference type="SAM" id="MobiDB-lite"/>
    </source>
</evidence>
<evidence type="ECO:0000305" key="3"/>
<reference key="1">
    <citation type="submission" date="2006-08" db="EMBL/GenBank/DDBJ databases">
        <title>Complete sequence of chromosome 1 of Burkholderia cenocepacia HI2424.</title>
        <authorList>
            <person name="Copeland A."/>
            <person name="Lucas S."/>
            <person name="Lapidus A."/>
            <person name="Barry K."/>
            <person name="Detter J.C."/>
            <person name="Glavina del Rio T."/>
            <person name="Hammon N."/>
            <person name="Israni S."/>
            <person name="Pitluck S."/>
            <person name="Chain P."/>
            <person name="Malfatti S."/>
            <person name="Shin M."/>
            <person name="Vergez L."/>
            <person name="Schmutz J."/>
            <person name="Larimer F."/>
            <person name="Land M."/>
            <person name="Hauser L."/>
            <person name="Kyrpides N."/>
            <person name="Kim E."/>
            <person name="LiPuma J.J."/>
            <person name="Gonzalez C.F."/>
            <person name="Konstantinidis K."/>
            <person name="Tiedje J.M."/>
            <person name="Richardson P."/>
        </authorList>
    </citation>
    <scope>NUCLEOTIDE SEQUENCE [LARGE SCALE GENOMIC DNA]</scope>
    <source>
        <strain>HI2424</strain>
    </source>
</reference>
<feature type="chain" id="PRO_0000336138" description="UPF0102 protein Bcen2424_0290">
    <location>
        <begin position="1"/>
        <end position="142"/>
    </location>
</feature>
<feature type="region of interest" description="Disordered" evidence="2">
    <location>
        <begin position="1"/>
        <end position="27"/>
    </location>
</feature>
<feature type="compositionally biased region" description="Low complexity" evidence="2">
    <location>
        <begin position="1"/>
        <end position="19"/>
    </location>
</feature>
<organism>
    <name type="scientific">Burkholderia cenocepacia (strain HI2424)</name>
    <dbReference type="NCBI Taxonomy" id="331272"/>
    <lineage>
        <taxon>Bacteria</taxon>
        <taxon>Pseudomonadati</taxon>
        <taxon>Pseudomonadota</taxon>
        <taxon>Betaproteobacteria</taxon>
        <taxon>Burkholderiales</taxon>
        <taxon>Burkholderiaceae</taxon>
        <taxon>Burkholderia</taxon>
        <taxon>Burkholderia cepacia complex</taxon>
    </lineage>
</organism>
<accession>A0K3G7</accession>
<protein>
    <recommendedName>
        <fullName evidence="1">UPF0102 protein Bcen2424_0290</fullName>
    </recommendedName>
</protein>
<gene>
    <name type="ordered locus">Bcen2424_0290</name>
</gene>
<name>Y290_BURCH</name>
<dbReference type="EMBL" id="CP000458">
    <property type="protein sequence ID" value="ABK07044.1"/>
    <property type="status" value="ALT_INIT"/>
    <property type="molecule type" value="Genomic_DNA"/>
</dbReference>
<dbReference type="RefSeq" id="WP_011546685.1">
    <property type="nucleotide sequence ID" value="NC_008542.1"/>
</dbReference>
<dbReference type="SMR" id="A0K3G7"/>
<dbReference type="KEGG" id="bch:Bcen2424_0290"/>
<dbReference type="HOGENOM" id="CLU_115353_1_0_4"/>
<dbReference type="GO" id="GO:0003676">
    <property type="term" value="F:nucleic acid binding"/>
    <property type="evidence" value="ECO:0007669"/>
    <property type="project" value="InterPro"/>
</dbReference>
<dbReference type="Gene3D" id="3.40.1350.10">
    <property type="match status" value="1"/>
</dbReference>
<dbReference type="HAMAP" id="MF_00048">
    <property type="entry name" value="UPF0102"/>
    <property type="match status" value="1"/>
</dbReference>
<dbReference type="InterPro" id="IPR011335">
    <property type="entry name" value="Restrct_endonuc-II-like"/>
</dbReference>
<dbReference type="InterPro" id="IPR011856">
    <property type="entry name" value="tRNA_endonuc-like_dom_sf"/>
</dbReference>
<dbReference type="InterPro" id="IPR003509">
    <property type="entry name" value="UPF0102_YraN-like"/>
</dbReference>
<dbReference type="NCBIfam" id="NF009150">
    <property type="entry name" value="PRK12497.1-3"/>
    <property type="match status" value="1"/>
</dbReference>
<dbReference type="NCBIfam" id="TIGR00252">
    <property type="entry name" value="YraN family protein"/>
    <property type="match status" value="1"/>
</dbReference>
<dbReference type="PANTHER" id="PTHR34039">
    <property type="entry name" value="UPF0102 PROTEIN YRAN"/>
    <property type="match status" value="1"/>
</dbReference>
<dbReference type="PANTHER" id="PTHR34039:SF1">
    <property type="entry name" value="UPF0102 PROTEIN YRAN"/>
    <property type="match status" value="1"/>
</dbReference>
<dbReference type="Pfam" id="PF02021">
    <property type="entry name" value="UPF0102"/>
    <property type="match status" value="1"/>
</dbReference>
<dbReference type="SUPFAM" id="SSF52980">
    <property type="entry name" value="Restriction endonuclease-like"/>
    <property type="match status" value="1"/>
</dbReference>
<proteinExistence type="inferred from homology"/>
<sequence length="142" mass="15504">MCHAAPARPEGARGRPPSGDNFSGAARSKPVGAAFEQRARQFLERHGLGFVAANVTMRGGELDLVMREPDGMLVFVEVRARRSTRHGGATASVGWRKRRRLVAAALQFWSRHGAGAACRFDVVAFEAGRLAWLRDAFRTDDA</sequence>